<protein>
    <recommendedName>
        <fullName evidence="1">Sec-independent protein translocase protein TatA</fullName>
    </recommendedName>
</protein>
<evidence type="ECO:0000255" key="1">
    <source>
        <dbReference type="HAMAP-Rule" id="MF_00236"/>
    </source>
</evidence>
<accession>B7GI41</accession>
<proteinExistence type="inferred from homology"/>
<reference key="1">
    <citation type="journal article" date="2008" name="Genome Biol.">
        <title>Encapsulated in silica: genome, proteome and physiology of the thermophilic bacterium Anoxybacillus flavithermus WK1.</title>
        <authorList>
            <person name="Saw J.H."/>
            <person name="Mountain B.W."/>
            <person name="Feng L."/>
            <person name="Omelchenko M.V."/>
            <person name="Hou S."/>
            <person name="Saito J.A."/>
            <person name="Stott M.B."/>
            <person name="Li D."/>
            <person name="Zhao G."/>
            <person name="Wu J."/>
            <person name="Galperin M.Y."/>
            <person name="Koonin E.V."/>
            <person name="Makarova K.S."/>
            <person name="Wolf Y.I."/>
            <person name="Rigden D.J."/>
            <person name="Dunfield P.F."/>
            <person name="Wang L."/>
            <person name="Alam M."/>
        </authorList>
    </citation>
    <scope>NUCLEOTIDE SEQUENCE [LARGE SCALE GENOMIC DNA]</scope>
    <source>
        <strain>DSM 21510 / WK1</strain>
    </source>
</reference>
<gene>
    <name evidence="1" type="primary">tatA</name>
    <name type="ordered locus">Aflv_1457</name>
</gene>
<dbReference type="EMBL" id="CP000922">
    <property type="protein sequence ID" value="ACJ33823.1"/>
    <property type="molecule type" value="Genomic_DNA"/>
</dbReference>
<dbReference type="RefSeq" id="WP_012575061.1">
    <property type="nucleotide sequence ID" value="NC_011567.1"/>
</dbReference>
<dbReference type="SMR" id="B7GI41"/>
<dbReference type="STRING" id="491915.Aflv_1457"/>
<dbReference type="GeneID" id="7037712"/>
<dbReference type="KEGG" id="afl:Aflv_1457"/>
<dbReference type="eggNOG" id="COG1826">
    <property type="taxonomic scope" value="Bacteria"/>
</dbReference>
<dbReference type="HOGENOM" id="CLU_086034_6_0_9"/>
<dbReference type="Proteomes" id="UP000000742">
    <property type="component" value="Chromosome"/>
</dbReference>
<dbReference type="GO" id="GO:0033281">
    <property type="term" value="C:TAT protein transport complex"/>
    <property type="evidence" value="ECO:0007669"/>
    <property type="project" value="UniProtKB-UniRule"/>
</dbReference>
<dbReference type="GO" id="GO:0008320">
    <property type="term" value="F:protein transmembrane transporter activity"/>
    <property type="evidence" value="ECO:0007669"/>
    <property type="project" value="UniProtKB-UniRule"/>
</dbReference>
<dbReference type="GO" id="GO:0043953">
    <property type="term" value="P:protein transport by the Tat complex"/>
    <property type="evidence" value="ECO:0007669"/>
    <property type="project" value="UniProtKB-UniRule"/>
</dbReference>
<dbReference type="Gene3D" id="1.20.5.3310">
    <property type="match status" value="1"/>
</dbReference>
<dbReference type="HAMAP" id="MF_00236">
    <property type="entry name" value="TatA_E"/>
    <property type="match status" value="1"/>
</dbReference>
<dbReference type="InterPro" id="IPR003369">
    <property type="entry name" value="TatA/B/E"/>
</dbReference>
<dbReference type="InterPro" id="IPR006312">
    <property type="entry name" value="TatA/E"/>
</dbReference>
<dbReference type="NCBIfam" id="NF011430">
    <property type="entry name" value="PRK14861.1"/>
    <property type="match status" value="1"/>
</dbReference>
<dbReference type="NCBIfam" id="TIGR01411">
    <property type="entry name" value="tatAE"/>
    <property type="match status" value="1"/>
</dbReference>
<dbReference type="PANTHER" id="PTHR42982">
    <property type="entry name" value="SEC-INDEPENDENT PROTEIN TRANSLOCASE PROTEIN TATA"/>
    <property type="match status" value="1"/>
</dbReference>
<dbReference type="PANTHER" id="PTHR42982:SF1">
    <property type="entry name" value="SEC-INDEPENDENT PROTEIN TRANSLOCASE PROTEIN TATA"/>
    <property type="match status" value="1"/>
</dbReference>
<dbReference type="Pfam" id="PF02416">
    <property type="entry name" value="TatA_B_E"/>
    <property type="match status" value="1"/>
</dbReference>
<dbReference type="PRINTS" id="PR01506">
    <property type="entry name" value="TATBPROTEIN"/>
</dbReference>
<feature type="chain" id="PRO_1000125185" description="Sec-independent protein translocase protein TatA">
    <location>
        <begin position="1"/>
        <end position="60"/>
    </location>
</feature>
<feature type="transmembrane region" description="Helical" evidence="1">
    <location>
        <begin position="1"/>
        <end position="21"/>
    </location>
</feature>
<keyword id="KW-1003">Cell membrane</keyword>
<keyword id="KW-0472">Membrane</keyword>
<keyword id="KW-0653">Protein transport</keyword>
<keyword id="KW-0811">Translocation</keyword>
<keyword id="KW-0812">Transmembrane</keyword>
<keyword id="KW-1133">Transmembrane helix</keyword>
<keyword id="KW-0813">Transport</keyword>
<organism>
    <name type="scientific">Anoxybacillus flavithermus (strain DSM 21510 / WK1)</name>
    <dbReference type="NCBI Taxonomy" id="491915"/>
    <lineage>
        <taxon>Bacteria</taxon>
        <taxon>Bacillati</taxon>
        <taxon>Bacillota</taxon>
        <taxon>Bacilli</taxon>
        <taxon>Bacillales</taxon>
        <taxon>Anoxybacillaceae</taxon>
        <taxon>Anoxybacillus</taxon>
    </lineage>
</organism>
<name>TATA_ANOFW</name>
<sequence>MLSNIGVPGLILILVIALVIFGPKKLPEIGRAFGETLREFKKSTKGLRDEVLEELDENKK</sequence>
<comment type="function">
    <text evidence="1">Part of the twin-arginine translocation (Tat) system that transports large folded proteins containing a characteristic twin-arginine motif in their signal peptide across membranes. TatA could form the protein-conducting channel of the Tat system.</text>
</comment>
<comment type="subunit">
    <text evidence="1">Forms a complex with TatC.</text>
</comment>
<comment type="subcellular location">
    <subcellularLocation>
        <location evidence="1">Cell membrane</location>
        <topology evidence="1">Single-pass membrane protein</topology>
    </subcellularLocation>
</comment>
<comment type="similarity">
    <text evidence="1">Belongs to the TatA/E family.</text>
</comment>